<sequence length="118" mass="14029">MSITSLKNQKEFELINKLGKKLHERYFILVIATKLPKIFLESKYNTFLGIKVSRKLNKKAVVRNKIKRRIRHLIRIIVSDSSFKDIKFAMIIIPRKGFEEINFSHLNYELSKLILRNI</sequence>
<keyword id="KW-0255">Endonuclease</keyword>
<keyword id="KW-0378">Hydrolase</keyword>
<keyword id="KW-0540">Nuclease</keyword>
<keyword id="KW-0694">RNA-binding</keyword>
<keyword id="KW-0819">tRNA processing</keyword>
<comment type="function">
    <text evidence="1">RNaseP catalyzes the removal of the 5'-leader sequence from pre-tRNA to produce the mature 5'-terminus. It can also cleave other RNA substrates such as 4.5S RNA. The protein component plays an auxiliary but essential role in vivo by binding to the 5'-leader sequence and broadening the substrate specificity of the ribozyme.</text>
</comment>
<comment type="catalytic activity">
    <reaction evidence="1">
        <text>Endonucleolytic cleavage of RNA, removing 5'-extranucleotides from tRNA precursor.</text>
        <dbReference type="EC" id="3.1.26.5"/>
    </reaction>
</comment>
<comment type="subunit">
    <text evidence="1">Consists of a catalytic RNA component (M1 or rnpB) and a protein subunit.</text>
</comment>
<comment type="similarity">
    <text evidence="1">Belongs to the RnpA family.</text>
</comment>
<dbReference type="EC" id="3.1.26.5" evidence="1"/>
<dbReference type="EMBL" id="CP000848">
    <property type="protein sequence ID" value="ABV76525.1"/>
    <property type="molecule type" value="Genomic_DNA"/>
</dbReference>
<dbReference type="RefSeq" id="WP_012151092.1">
    <property type="nucleotide sequence ID" value="NZ_CP121767.1"/>
</dbReference>
<dbReference type="SMR" id="A8GT00"/>
<dbReference type="GeneID" id="79937609"/>
<dbReference type="KEGG" id="rri:A1G_05160"/>
<dbReference type="HOGENOM" id="CLU_2047938_0_0_5"/>
<dbReference type="Proteomes" id="UP000006832">
    <property type="component" value="Chromosome"/>
</dbReference>
<dbReference type="GO" id="GO:0030677">
    <property type="term" value="C:ribonuclease P complex"/>
    <property type="evidence" value="ECO:0007669"/>
    <property type="project" value="TreeGrafter"/>
</dbReference>
<dbReference type="GO" id="GO:0042781">
    <property type="term" value="F:3'-tRNA processing endoribonuclease activity"/>
    <property type="evidence" value="ECO:0007669"/>
    <property type="project" value="TreeGrafter"/>
</dbReference>
<dbReference type="GO" id="GO:0004526">
    <property type="term" value="F:ribonuclease P activity"/>
    <property type="evidence" value="ECO:0007669"/>
    <property type="project" value="UniProtKB-UniRule"/>
</dbReference>
<dbReference type="GO" id="GO:0000049">
    <property type="term" value="F:tRNA binding"/>
    <property type="evidence" value="ECO:0007669"/>
    <property type="project" value="UniProtKB-UniRule"/>
</dbReference>
<dbReference type="GO" id="GO:0001682">
    <property type="term" value="P:tRNA 5'-leader removal"/>
    <property type="evidence" value="ECO:0007669"/>
    <property type="project" value="UniProtKB-UniRule"/>
</dbReference>
<dbReference type="Gene3D" id="3.30.230.10">
    <property type="match status" value="1"/>
</dbReference>
<dbReference type="HAMAP" id="MF_00227">
    <property type="entry name" value="RNase_P"/>
    <property type="match status" value="1"/>
</dbReference>
<dbReference type="InterPro" id="IPR020568">
    <property type="entry name" value="Ribosomal_Su5_D2-typ_SF"/>
</dbReference>
<dbReference type="InterPro" id="IPR014721">
    <property type="entry name" value="Ribsml_uS5_D2-typ_fold_subgr"/>
</dbReference>
<dbReference type="InterPro" id="IPR000100">
    <property type="entry name" value="RNase_P"/>
</dbReference>
<dbReference type="InterPro" id="IPR020539">
    <property type="entry name" value="RNase_P_CS"/>
</dbReference>
<dbReference type="NCBIfam" id="TIGR00188">
    <property type="entry name" value="rnpA"/>
    <property type="match status" value="1"/>
</dbReference>
<dbReference type="PANTHER" id="PTHR33992">
    <property type="entry name" value="RIBONUCLEASE P PROTEIN COMPONENT"/>
    <property type="match status" value="1"/>
</dbReference>
<dbReference type="PANTHER" id="PTHR33992:SF1">
    <property type="entry name" value="RIBONUCLEASE P PROTEIN COMPONENT"/>
    <property type="match status" value="1"/>
</dbReference>
<dbReference type="Pfam" id="PF00825">
    <property type="entry name" value="Ribonuclease_P"/>
    <property type="match status" value="1"/>
</dbReference>
<dbReference type="SUPFAM" id="SSF54211">
    <property type="entry name" value="Ribosomal protein S5 domain 2-like"/>
    <property type="match status" value="1"/>
</dbReference>
<dbReference type="PROSITE" id="PS00648">
    <property type="entry name" value="RIBONUCLEASE_P"/>
    <property type="match status" value="1"/>
</dbReference>
<accession>A8GT00</accession>
<evidence type="ECO:0000255" key="1">
    <source>
        <dbReference type="HAMAP-Rule" id="MF_00227"/>
    </source>
</evidence>
<name>RNPA_RICRS</name>
<feature type="chain" id="PRO_1000100384" description="Ribonuclease P protein component">
    <location>
        <begin position="1"/>
        <end position="118"/>
    </location>
</feature>
<reference key="1">
    <citation type="submission" date="2007-09" db="EMBL/GenBank/DDBJ databases">
        <title>Complete genome sequence of Rickettsia rickettsii.</title>
        <authorList>
            <person name="Madan A."/>
            <person name="Fahey J."/>
            <person name="Helton E."/>
            <person name="Ketteman M."/>
            <person name="Madan A."/>
            <person name="Rodrigues S."/>
            <person name="Sanchez A."/>
            <person name="Dasch G."/>
            <person name="Eremeeva M."/>
        </authorList>
    </citation>
    <scope>NUCLEOTIDE SEQUENCE [LARGE SCALE GENOMIC DNA]</scope>
    <source>
        <strain>Sheila Smith</strain>
    </source>
</reference>
<proteinExistence type="inferred from homology"/>
<protein>
    <recommendedName>
        <fullName evidence="1">Ribonuclease P protein component</fullName>
        <shortName evidence="1">RNase P protein</shortName>
        <shortName evidence="1">RNaseP protein</shortName>
        <ecNumber evidence="1">3.1.26.5</ecNumber>
    </recommendedName>
    <alternativeName>
        <fullName evidence="1">Protein C5</fullName>
    </alternativeName>
</protein>
<gene>
    <name evidence="1" type="primary">rnpA</name>
    <name type="ordered locus">A1G_05160</name>
</gene>
<organism>
    <name type="scientific">Rickettsia rickettsii (strain Sheila Smith)</name>
    <dbReference type="NCBI Taxonomy" id="392021"/>
    <lineage>
        <taxon>Bacteria</taxon>
        <taxon>Pseudomonadati</taxon>
        <taxon>Pseudomonadota</taxon>
        <taxon>Alphaproteobacteria</taxon>
        <taxon>Rickettsiales</taxon>
        <taxon>Rickettsiaceae</taxon>
        <taxon>Rickettsieae</taxon>
        <taxon>Rickettsia</taxon>
        <taxon>spotted fever group</taxon>
    </lineage>
</organism>